<protein>
    <recommendedName>
        <fullName evidence="1">Methylthioribose-1-phosphate isomerase</fullName>
        <shortName evidence="1">M1Pi</shortName>
        <shortName evidence="1">MTR-1-P isomerase</shortName>
        <ecNumber evidence="1">5.3.1.23</ecNumber>
    </recommendedName>
    <alternativeName>
        <fullName evidence="1">S-methyl-5-thioribose-1-phosphate isomerase</fullName>
    </alternativeName>
</protein>
<sequence length="345" mass="37354">MKALEWMGDSLKILDQTRLPVEIKYRMAATYEEVAEAIEKMEVRGAPAIGAAAAYGYALGAIGYSGELAGLSAHMEKVQHRLAETRPTAVNLFWALRRMEDRLRDQHEAKELAEIRQALVAEAESIAEDDRRVNRLIGEHGNAIVTAEANILTHCNAGALATVEYGTALGVIRAAQQAGKKVHVYAGETRPFLQGARLTALELMNDHIPVTLIADNMAGFLMQQGNIDLVIVGADRIAANGDTANKIGTYSLAVLAHAHGIPFYVAAPTSTIDLKVPSGQDIPIEERNPKELREVFGVQVAPPEVPVYNPAFDVTPAKLITGIITEKGIVTSPYSVNLLKMMVRS</sequence>
<reference key="1">
    <citation type="journal article" date="2006" name="J. Bacteriol.">
        <title>Complete genome sequence of the dehalorespiring bacterium Desulfitobacterium hafniense Y51 and comparison with Dehalococcoides ethenogenes 195.</title>
        <authorList>
            <person name="Nonaka H."/>
            <person name="Keresztes G."/>
            <person name="Shinoda Y."/>
            <person name="Ikenaga Y."/>
            <person name="Abe M."/>
            <person name="Naito K."/>
            <person name="Inatomi K."/>
            <person name="Furukawa K."/>
            <person name="Inui M."/>
            <person name="Yukawa H."/>
        </authorList>
    </citation>
    <scope>NUCLEOTIDE SEQUENCE [LARGE SCALE GENOMIC DNA]</scope>
    <source>
        <strain>Y51</strain>
    </source>
</reference>
<organism>
    <name type="scientific">Desulfitobacterium hafniense (strain Y51)</name>
    <dbReference type="NCBI Taxonomy" id="138119"/>
    <lineage>
        <taxon>Bacteria</taxon>
        <taxon>Bacillati</taxon>
        <taxon>Bacillota</taxon>
        <taxon>Clostridia</taxon>
        <taxon>Eubacteriales</taxon>
        <taxon>Desulfitobacteriaceae</taxon>
        <taxon>Desulfitobacterium</taxon>
    </lineage>
</organism>
<evidence type="ECO:0000255" key="1">
    <source>
        <dbReference type="HAMAP-Rule" id="MF_01678"/>
    </source>
</evidence>
<evidence type="ECO:0000305" key="2"/>
<comment type="function">
    <text evidence="1">Catalyzes the interconversion of methylthioribose-1-phosphate (MTR-1-P) into methylthioribulose-1-phosphate (MTRu-1-P).</text>
</comment>
<comment type="catalytic activity">
    <reaction evidence="1">
        <text>5-(methylsulfanyl)-alpha-D-ribose 1-phosphate = 5-(methylsulfanyl)-D-ribulose 1-phosphate</text>
        <dbReference type="Rhea" id="RHEA:19989"/>
        <dbReference type="ChEBI" id="CHEBI:58533"/>
        <dbReference type="ChEBI" id="CHEBI:58548"/>
        <dbReference type="EC" id="5.3.1.23"/>
    </reaction>
</comment>
<comment type="pathway">
    <text evidence="1">Amino-acid biosynthesis; L-methionine biosynthesis via salvage pathway; L-methionine from S-methyl-5-thio-alpha-D-ribose 1-phosphate: step 1/6.</text>
</comment>
<comment type="similarity">
    <text evidence="2">Belongs to the eIF-2B alpha/beta/delta subunits family. MtnA subfamily.</text>
</comment>
<proteinExistence type="inferred from homology"/>
<accession>Q24UA0</accession>
<gene>
    <name evidence="1" type="primary">mtnA</name>
    <name type="ordered locus">DSY2603</name>
</gene>
<feature type="chain" id="PRO_0000357174" description="Methylthioribose-1-phosphate isomerase">
    <location>
        <begin position="1"/>
        <end position="345"/>
    </location>
</feature>
<feature type="active site" description="Proton donor" evidence="1">
    <location>
        <position position="235"/>
    </location>
</feature>
<feature type="binding site" evidence="1">
    <location>
        <begin position="44"/>
        <end position="46"/>
    </location>
    <ligand>
        <name>substrate</name>
    </ligand>
</feature>
<feature type="binding site" evidence="1">
    <location>
        <position position="86"/>
    </location>
    <ligand>
        <name>substrate</name>
    </ligand>
</feature>
<feature type="binding site" evidence="1">
    <location>
        <position position="194"/>
    </location>
    <ligand>
        <name>substrate</name>
    </ligand>
</feature>
<feature type="binding site" evidence="1">
    <location>
        <begin position="245"/>
        <end position="246"/>
    </location>
    <ligand>
        <name>substrate</name>
    </ligand>
</feature>
<feature type="site" description="Transition state stabilizer" evidence="1">
    <location>
        <position position="155"/>
    </location>
</feature>
<dbReference type="EC" id="5.3.1.23" evidence="1"/>
<dbReference type="EMBL" id="AP008230">
    <property type="protein sequence ID" value="BAE84392.1"/>
    <property type="molecule type" value="Genomic_DNA"/>
</dbReference>
<dbReference type="RefSeq" id="WP_011460451.1">
    <property type="nucleotide sequence ID" value="NC_007907.1"/>
</dbReference>
<dbReference type="SMR" id="Q24UA0"/>
<dbReference type="STRING" id="138119.DSY2603"/>
<dbReference type="KEGG" id="dsy:DSY2603"/>
<dbReference type="eggNOG" id="COG0182">
    <property type="taxonomic scope" value="Bacteria"/>
</dbReference>
<dbReference type="HOGENOM" id="CLU_016218_1_2_9"/>
<dbReference type="UniPathway" id="UPA00904">
    <property type="reaction ID" value="UER00874"/>
</dbReference>
<dbReference type="Proteomes" id="UP000001946">
    <property type="component" value="Chromosome"/>
</dbReference>
<dbReference type="GO" id="GO:0046523">
    <property type="term" value="F:S-methyl-5-thioribose-1-phosphate isomerase activity"/>
    <property type="evidence" value="ECO:0007669"/>
    <property type="project" value="UniProtKB-UniRule"/>
</dbReference>
<dbReference type="GO" id="GO:0019509">
    <property type="term" value="P:L-methionine salvage from methylthioadenosine"/>
    <property type="evidence" value="ECO:0007669"/>
    <property type="project" value="UniProtKB-UniRule"/>
</dbReference>
<dbReference type="FunFam" id="1.20.120.420:FF:000003">
    <property type="entry name" value="Methylthioribose-1-phosphate isomerase"/>
    <property type="match status" value="1"/>
</dbReference>
<dbReference type="FunFam" id="3.40.50.10470:FF:000006">
    <property type="entry name" value="Methylthioribose-1-phosphate isomerase"/>
    <property type="match status" value="1"/>
</dbReference>
<dbReference type="Gene3D" id="1.20.120.420">
    <property type="entry name" value="translation initiation factor eif-2b, domain 1"/>
    <property type="match status" value="1"/>
</dbReference>
<dbReference type="Gene3D" id="3.40.50.10470">
    <property type="entry name" value="Translation initiation factor eif-2b, domain 2"/>
    <property type="match status" value="1"/>
</dbReference>
<dbReference type="HAMAP" id="MF_01678">
    <property type="entry name" value="Salvage_MtnA"/>
    <property type="match status" value="1"/>
</dbReference>
<dbReference type="InterPro" id="IPR000649">
    <property type="entry name" value="IF-2B-related"/>
</dbReference>
<dbReference type="InterPro" id="IPR005251">
    <property type="entry name" value="IF-M1Pi"/>
</dbReference>
<dbReference type="InterPro" id="IPR042529">
    <property type="entry name" value="IF_2B-like_C"/>
</dbReference>
<dbReference type="InterPro" id="IPR011559">
    <property type="entry name" value="Initiation_fac_2B_a/b/d"/>
</dbReference>
<dbReference type="InterPro" id="IPR027363">
    <property type="entry name" value="M1Pi_N"/>
</dbReference>
<dbReference type="InterPro" id="IPR037171">
    <property type="entry name" value="NagB/RpiA_transferase-like"/>
</dbReference>
<dbReference type="NCBIfam" id="TIGR00524">
    <property type="entry name" value="eIF-2B_rel"/>
    <property type="match status" value="1"/>
</dbReference>
<dbReference type="NCBIfam" id="NF004326">
    <property type="entry name" value="PRK05720.1"/>
    <property type="match status" value="1"/>
</dbReference>
<dbReference type="NCBIfam" id="TIGR00512">
    <property type="entry name" value="salvage_mtnA"/>
    <property type="match status" value="1"/>
</dbReference>
<dbReference type="PANTHER" id="PTHR43475">
    <property type="entry name" value="METHYLTHIORIBOSE-1-PHOSPHATE ISOMERASE"/>
    <property type="match status" value="1"/>
</dbReference>
<dbReference type="PANTHER" id="PTHR43475:SF1">
    <property type="entry name" value="METHYLTHIORIBOSE-1-PHOSPHATE ISOMERASE"/>
    <property type="match status" value="1"/>
</dbReference>
<dbReference type="Pfam" id="PF01008">
    <property type="entry name" value="IF-2B"/>
    <property type="match status" value="1"/>
</dbReference>
<dbReference type="SUPFAM" id="SSF100950">
    <property type="entry name" value="NagB/RpiA/CoA transferase-like"/>
    <property type="match status" value="1"/>
</dbReference>
<keyword id="KW-0028">Amino-acid biosynthesis</keyword>
<keyword id="KW-0413">Isomerase</keyword>
<keyword id="KW-0486">Methionine biosynthesis</keyword>
<keyword id="KW-1185">Reference proteome</keyword>
<name>MTNA_DESHY</name>